<protein>
    <recommendedName>
        <fullName evidence="3">Immunoglobulin lambda variable 2</fullName>
    </recommendedName>
    <alternativeName>
        <fullName evidence="2">Ig lambda-2 chain V region</fullName>
    </alternativeName>
</protein>
<organism>
    <name type="scientific">Mus musculus</name>
    <name type="common">Mouse</name>
    <dbReference type="NCBI Taxonomy" id="10090"/>
    <lineage>
        <taxon>Eukaryota</taxon>
        <taxon>Metazoa</taxon>
        <taxon>Chordata</taxon>
        <taxon>Craniata</taxon>
        <taxon>Vertebrata</taxon>
        <taxon>Euteleostomi</taxon>
        <taxon>Mammalia</taxon>
        <taxon>Eutheria</taxon>
        <taxon>Euarchontoglires</taxon>
        <taxon>Glires</taxon>
        <taxon>Rodentia</taxon>
        <taxon>Myomorpha</taxon>
        <taxon>Muroidea</taxon>
        <taxon>Muridae</taxon>
        <taxon>Murinae</taxon>
        <taxon>Mus</taxon>
        <taxon>Mus</taxon>
    </lineage>
</organism>
<accession>P01728</accession>
<evidence type="ECO:0000250" key="1">
    <source>
        <dbReference type="UniProtKB" id="P01724"/>
    </source>
</evidence>
<evidence type="ECO:0000305" key="2"/>
<evidence type="ECO:0000312" key="3">
    <source>
        <dbReference type="MGI" id="MGI:99548"/>
    </source>
</evidence>
<sequence length="117" mass="12222">MAWTSLILSLLALCSGASSQAVVTQESALTTSPGGTVILTCRSSTGAVTTSNYANWVQEKPDHLFTGLIGGTSNRAPGVPVRFSGSLIGDKAALTITGAQTEDDAMYFCALWYSTHF</sequence>
<proteinExistence type="inferred from homology"/>
<keyword id="KW-1064">Adaptive immunity</keyword>
<keyword id="KW-0391">Immunity</keyword>
<keyword id="KW-1280">Immunoglobulin</keyword>
<keyword id="KW-0873">Pyrrolidone carboxylic acid</keyword>
<keyword id="KW-1185">Reference proteome</keyword>
<keyword id="KW-0732">Signal</keyword>
<dbReference type="EMBL" id="J00599">
    <property type="protein sequence ID" value="AAA39167.1"/>
    <property type="molecule type" value="Genomic_DNA"/>
</dbReference>
<dbReference type="EMBL" id="V00815">
    <property type="protein sequence ID" value="CAA24196.2"/>
    <property type="molecule type" value="Genomic_DNA"/>
</dbReference>
<dbReference type="EMBL" id="X58412">
    <property type="protein sequence ID" value="CAA41313.1"/>
    <property type="molecule type" value="Genomic_DNA"/>
</dbReference>
<dbReference type="EMBL" id="X58418">
    <property type="protein sequence ID" value="CAA41318.1"/>
    <property type="molecule type" value="Genomic_DNA"/>
</dbReference>
<dbReference type="EMBL" id="X58423">
    <property type="protein sequence ID" value="CAA41323.1"/>
    <property type="molecule type" value="Genomic_DNA"/>
</dbReference>
<dbReference type="EMBL" id="X58424">
    <property type="protein sequence ID" value="CAA41324.1"/>
    <property type="molecule type" value="Genomic_DNA"/>
</dbReference>
<dbReference type="PIR" id="A01996">
    <property type="entry name" value="L2MSWE"/>
</dbReference>
<dbReference type="PIR" id="PL0192">
    <property type="entry name" value="PL0192"/>
</dbReference>
<dbReference type="SMR" id="P01728"/>
<dbReference type="FunCoup" id="P01728">
    <property type="interactions" value="802"/>
</dbReference>
<dbReference type="Ensembl" id="ENSMUST00000197518.2">
    <property type="protein sequence ID" value="ENSMUSP00000142646.2"/>
    <property type="gene ID" value="ENSMUSG00000076940.4"/>
</dbReference>
<dbReference type="AGR" id="MGI:99548"/>
<dbReference type="MGI" id="MGI:99548">
    <property type="gene designation" value="Iglv2"/>
</dbReference>
<dbReference type="VEuPathDB" id="HostDB:ENSMUSG00000076940"/>
<dbReference type="GeneTree" id="ENSGT00940000163781"/>
<dbReference type="HOGENOM" id="CLU_077975_4_0_1"/>
<dbReference type="InParanoid" id="P01728"/>
<dbReference type="OMA" id="HYHRDRG"/>
<dbReference type="OrthoDB" id="8908372at2759"/>
<dbReference type="Proteomes" id="UP000000589">
    <property type="component" value="Chromosome 16"/>
</dbReference>
<dbReference type="RNAct" id="P01728">
    <property type="molecule type" value="protein"/>
</dbReference>
<dbReference type="Bgee" id="ENSMUSG00000076940">
    <property type="expression patterns" value="Expressed in spleen and 23 other cell types or tissues"/>
</dbReference>
<dbReference type="ExpressionAtlas" id="P01728">
    <property type="expression patterns" value="baseline and differential"/>
</dbReference>
<dbReference type="GO" id="GO:0019814">
    <property type="term" value="C:immunoglobulin complex"/>
    <property type="evidence" value="ECO:0000318"/>
    <property type="project" value="GO_Central"/>
</dbReference>
<dbReference type="GO" id="GO:0002250">
    <property type="term" value="P:adaptive immune response"/>
    <property type="evidence" value="ECO:0007669"/>
    <property type="project" value="UniProtKB-KW"/>
</dbReference>
<dbReference type="GO" id="GO:0006955">
    <property type="term" value="P:immune response"/>
    <property type="evidence" value="ECO:0000318"/>
    <property type="project" value="GO_Central"/>
</dbReference>
<dbReference type="FunFam" id="2.60.40.10:FF:002073">
    <property type="entry name" value="Ig lambda-1 chain V regions MOPC 104E/RPC20/J558/S104"/>
    <property type="match status" value="1"/>
</dbReference>
<dbReference type="Gene3D" id="2.60.40.10">
    <property type="entry name" value="Immunoglobulins"/>
    <property type="match status" value="1"/>
</dbReference>
<dbReference type="InterPro" id="IPR007110">
    <property type="entry name" value="Ig-like_dom"/>
</dbReference>
<dbReference type="InterPro" id="IPR036179">
    <property type="entry name" value="Ig-like_dom_sf"/>
</dbReference>
<dbReference type="InterPro" id="IPR013783">
    <property type="entry name" value="Ig-like_fold"/>
</dbReference>
<dbReference type="InterPro" id="IPR013106">
    <property type="entry name" value="Ig_V-set"/>
</dbReference>
<dbReference type="InterPro" id="IPR050150">
    <property type="entry name" value="IgV_Light_Chain"/>
</dbReference>
<dbReference type="PANTHER" id="PTHR23267">
    <property type="entry name" value="IMMUNOGLOBULIN LIGHT CHAIN"/>
    <property type="match status" value="1"/>
</dbReference>
<dbReference type="Pfam" id="PF07686">
    <property type="entry name" value="V-set"/>
    <property type="match status" value="1"/>
</dbReference>
<dbReference type="SMART" id="SM00406">
    <property type="entry name" value="IGv"/>
    <property type="match status" value="1"/>
</dbReference>
<dbReference type="SUPFAM" id="SSF48726">
    <property type="entry name" value="Immunoglobulin"/>
    <property type="match status" value="1"/>
</dbReference>
<dbReference type="PROSITE" id="PS50835">
    <property type="entry name" value="IG_LIKE"/>
    <property type="match status" value="1"/>
</dbReference>
<feature type="signal peptide">
    <location>
        <begin position="1"/>
        <end position="19"/>
    </location>
</feature>
<feature type="chain" id="PRO_0000015205" description="Immunoglobulin lambda variable 2">
    <location>
        <begin position="20"/>
        <end position="117"/>
    </location>
</feature>
<feature type="domain" description="Ig-like">
    <location>
        <begin position="20"/>
        <end position="117" status="greater than"/>
    </location>
</feature>
<feature type="modified residue" description="Pyrrolidone carboxylic acid" evidence="1">
    <location>
        <position position="20"/>
    </location>
</feature>
<feature type="non-terminal residue">
    <location>
        <position position="117"/>
    </location>
</feature>
<name>LV2A_MOUSE</name>
<reference key="1">
    <citation type="journal article" date="1978" name="Proc. Natl. Acad. Sci. U.S.A.">
        <title>Sequence of a mouse germ-line gene for a variable region of an immunoglobulin light chain.</title>
        <authorList>
            <person name="Tonegawa S."/>
            <person name="Maxam A.M."/>
            <person name="Tizard R."/>
            <person name="Bernard O."/>
            <person name="Gilbert W."/>
        </authorList>
    </citation>
    <scope>NUCLEOTIDE SEQUENCE [GENOMIC DNA]</scope>
</reference>